<feature type="chain" id="PRO_1000119447" description="Homoserine O-acetyltransferase">
    <location>
        <begin position="1"/>
        <end position="301"/>
    </location>
</feature>
<feature type="active site" description="Acyl-thioester intermediate" evidence="1">
    <location>
        <position position="142"/>
    </location>
</feature>
<feature type="active site" description="Proton acceptor" evidence="1">
    <location>
        <position position="235"/>
    </location>
</feature>
<feature type="active site" evidence="1">
    <location>
        <position position="237"/>
    </location>
</feature>
<feature type="binding site" evidence="1">
    <location>
        <position position="163"/>
    </location>
    <ligand>
        <name>substrate</name>
    </ligand>
</feature>
<feature type="binding site" evidence="1">
    <location>
        <position position="192"/>
    </location>
    <ligand>
        <name>substrate</name>
    </ligand>
</feature>
<feature type="binding site" evidence="1">
    <location>
        <position position="249"/>
    </location>
    <ligand>
        <name>substrate</name>
    </ligand>
</feature>
<feature type="site" description="Important for acyl-CoA specificity" evidence="1">
    <location>
        <position position="111"/>
    </location>
</feature>
<feature type="site" description="Important for substrate specificity" evidence="1">
    <location>
        <position position="192"/>
    </location>
</feature>
<reference key="1">
    <citation type="submission" date="2008-10" db="EMBL/GenBank/DDBJ databases">
        <title>Genome sequence of Bacillus cereus AH187.</title>
        <authorList>
            <person name="Dodson R.J."/>
            <person name="Durkin A.S."/>
            <person name="Rosovitz M.J."/>
            <person name="Rasko D.A."/>
            <person name="Kolsto A.B."/>
            <person name="Okstad O.A."/>
            <person name="Ravel J."/>
            <person name="Sutton G."/>
        </authorList>
    </citation>
    <scope>NUCLEOTIDE SEQUENCE [LARGE SCALE GENOMIC DNA]</scope>
    <source>
        <strain>AH187</strain>
    </source>
</reference>
<protein>
    <recommendedName>
        <fullName evidence="1">Homoserine O-acetyltransferase</fullName>
        <shortName evidence="1">HAT</shortName>
        <ecNumber evidence="1">2.3.1.31</ecNumber>
    </recommendedName>
    <alternativeName>
        <fullName evidence="1">Homoserine transacetylase</fullName>
        <shortName evidence="1">HTA</shortName>
    </alternativeName>
</protein>
<dbReference type="EC" id="2.3.1.31" evidence="1"/>
<dbReference type="EMBL" id="CP001177">
    <property type="protein sequence ID" value="ACJ77995.1"/>
    <property type="molecule type" value="Genomic_DNA"/>
</dbReference>
<dbReference type="SMR" id="B7HYG6"/>
<dbReference type="KEGG" id="bcr:BCAH187_A5584"/>
<dbReference type="HOGENOM" id="CLU_057851_0_1_9"/>
<dbReference type="UniPathway" id="UPA00051">
    <property type="reaction ID" value="UER00074"/>
</dbReference>
<dbReference type="Proteomes" id="UP000002214">
    <property type="component" value="Chromosome"/>
</dbReference>
<dbReference type="GO" id="GO:0005737">
    <property type="term" value="C:cytoplasm"/>
    <property type="evidence" value="ECO:0007669"/>
    <property type="project" value="UniProtKB-SubCell"/>
</dbReference>
<dbReference type="GO" id="GO:0004414">
    <property type="term" value="F:homoserine O-acetyltransferase activity"/>
    <property type="evidence" value="ECO:0007669"/>
    <property type="project" value="UniProtKB-EC"/>
</dbReference>
<dbReference type="GO" id="GO:0008899">
    <property type="term" value="F:homoserine O-succinyltransferase activity"/>
    <property type="evidence" value="ECO:0007669"/>
    <property type="project" value="UniProtKB-UniRule"/>
</dbReference>
<dbReference type="GO" id="GO:0019281">
    <property type="term" value="P:L-methionine biosynthetic process from homoserine via O-succinyl-L-homoserine and cystathionine"/>
    <property type="evidence" value="ECO:0007669"/>
    <property type="project" value="InterPro"/>
</dbReference>
<dbReference type="CDD" id="cd03131">
    <property type="entry name" value="GATase1_HTS"/>
    <property type="match status" value="1"/>
</dbReference>
<dbReference type="FunFam" id="3.40.50.880:FF:000004">
    <property type="entry name" value="Homoserine O-succinyltransferase"/>
    <property type="match status" value="1"/>
</dbReference>
<dbReference type="Gene3D" id="3.40.50.880">
    <property type="match status" value="1"/>
</dbReference>
<dbReference type="HAMAP" id="MF_00295">
    <property type="entry name" value="MetA_acyltransf"/>
    <property type="match status" value="1"/>
</dbReference>
<dbReference type="InterPro" id="IPR029062">
    <property type="entry name" value="Class_I_gatase-like"/>
</dbReference>
<dbReference type="InterPro" id="IPR005697">
    <property type="entry name" value="HST_MetA"/>
</dbReference>
<dbReference type="InterPro" id="IPR033752">
    <property type="entry name" value="MetA_family"/>
</dbReference>
<dbReference type="NCBIfam" id="TIGR01001">
    <property type="entry name" value="metA"/>
    <property type="match status" value="1"/>
</dbReference>
<dbReference type="PANTHER" id="PTHR20919">
    <property type="entry name" value="HOMOSERINE O-SUCCINYLTRANSFERASE"/>
    <property type="match status" value="1"/>
</dbReference>
<dbReference type="PANTHER" id="PTHR20919:SF0">
    <property type="entry name" value="HOMOSERINE O-SUCCINYLTRANSFERASE"/>
    <property type="match status" value="1"/>
</dbReference>
<dbReference type="Pfam" id="PF04204">
    <property type="entry name" value="HTS"/>
    <property type="match status" value="1"/>
</dbReference>
<dbReference type="PIRSF" id="PIRSF000450">
    <property type="entry name" value="H_ser_succinyltr"/>
    <property type="match status" value="1"/>
</dbReference>
<dbReference type="SUPFAM" id="SSF52317">
    <property type="entry name" value="Class I glutamine amidotransferase-like"/>
    <property type="match status" value="1"/>
</dbReference>
<gene>
    <name evidence="1" type="primary">metAA</name>
    <name type="ordered locus">BCAH187_A5584</name>
</gene>
<proteinExistence type="inferred from homology"/>
<accession>B7HYG6</accession>
<evidence type="ECO:0000255" key="1">
    <source>
        <dbReference type="HAMAP-Rule" id="MF_00295"/>
    </source>
</evidence>
<keyword id="KW-0012">Acyltransferase</keyword>
<keyword id="KW-0028">Amino-acid biosynthesis</keyword>
<keyword id="KW-0963">Cytoplasm</keyword>
<keyword id="KW-0486">Methionine biosynthesis</keyword>
<keyword id="KW-0808">Transferase</keyword>
<name>METAA_BACC7</name>
<comment type="function">
    <text evidence="1">Transfers an acetyl group from acetyl-CoA to L-homoserine, forming acetyl-L-homoserine.</text>
</comment>
<comment type="catalytic activity">
    <reaction evidence="1">
        <text>L-homoserine + acetyl-CoA = O-acetyl-L-homoserine + CoA</text>
        <dbReference type="Rhea" id="RHEA:13701"/>
        <dbReference type="ChEBI" id="CHEBI:57287"/>
        <dbReference type="ChEBI" id="CHEBI:57288"/>
        <dbReference type="ChEBI" id="CHEBI:57476"/>
        <dbReference type="ChEBI" id="CHEBI:57716"/>
        <dbReference type="EC" id="2.3.1.31"/>
    </reaction>
</comment>
<comment type="pathway">
    <text evidence="1">Amino-acid biosynthesis; L-methionine biosynthesis via de novo pathway; O-acetyl-L-homoserine from L-homoserine: step 1/1.</text>
</comment>
<comment type="subcellular location">
    <subcellularLocation>
        <location evidence="1">Cytoplasm</location>
    </subcellularLocation>
</comment>
<comment type="similarity">
    <text evidence="1">Belongs to the MetA family.</text>
</comment>
<organism>
    <name type="scientific">Bacillus cereus (strain AH187)</name>
    <dbReference type="NCBI Taxonomy" id="405534"/>
    <lineage>
        <taxon>Bacteria</taxon>
        <taxon>Bacillati</taxon>
        <taxon>Bacillota</taxon>
        <taxon>Bacilli</taxon>
        <taxon>Bacillales</taxon>
        <taxon>Bacillaceae</taxon>
        <taxon>Bacillus</taxon>
        <taxon>Bacillus cereus group</taxon>
    </lineage>
</organism>
<sequence length="301" mass="35303">MPIIIDKDLPARKVLQEENIFVMTKERAETQDIRALKIAILNLMPTKQETEAQLLRLIGNTPLQLDVHLLHMESHLSRNVAQEHLTSFYKTFRDIENEKFDGLIITGAPVETLSFEEVDYWEELKRIMEYSKTNVTSTLHICWGAQAGLYHHYGVPKYPLKEKIFGVFEHEVREQHVKLLQGFDELFFAPHSRHTEVRESDIREVKELTLLANSEEAGVHLVIGQEGRQVFALGHSEYSCDTLKQEYERDRQKGLNIDVPKNYFKHNNPNEKPLVRWRSHGNLLFSNWLNYYVYQETPYVL</sequence>